<comment type="function">
    <text evidence="1">Produces ATP from ADP in the presence of a proton gradient across the membrane. The gamma chain is believed to be important in regulating ATPase activity and the flow of protons through the CF(0) complex.</text>
</comment>
<comment type="subunit">
    <text evidence="1">F-type ATPases have 2 components, CF(1) - the catalytic core - and CF(0) - the membrane proton channel. CF(1) has five subunits: alpha(3), beta(3), gamma(1), delta(1), epsilon(1). CF(0) has three main subunits: a, b and c.</text>
</comment>
<comment type="subcellular location">
    <subcellularLocation>
        <location evidence="1">Cell inner membrane</location>
        <topology evidence="1">Peripheral membrane protein</topology>
    </subcellularLocation>
</comment>
<comment type="similarity">
    <text evidence="1">Belongs to the ATPase gamma chain family.</text>
</comment>
<protein>
    <recommendedName>
        <fullName evidence="1">ATP synthase gamma chain</fullName>
    </recommendedName>
    <alternativeName>
        <fullName evidence="1">ATP synthase F1 sector gamma subunit</fullName>
    </alternativeName>
    <alternativeName>
        <fullName evidence="1">F-ATPase gamma subunit</fullName>
    </alternativeName>
</protein>
<name>ATPG_VIBVU</name>
<dbReference type="EMBL" id="AE016795">
    <property type="protein sequence ID" value="AAO09508.1"/>
    <property type="molecule type" value="Genomic_DNA"/>
</dbReference>
<dbReference type="RefSeq" id="WP_011079054.1">
    <property type="nucleotide sequence ID" value="NC_004459.3"/>
</dbReference>
<dbReference type="SMR" id="Q8DDG9"/>
<dbReference type="KEGG" id="vvu:VV1_1020"/>
<dbReference type="HOGENOM" id="CLU_050669_0_1_6"/>
<dbReference type="Proteomes" id="UP000002275">
    <property type="component" value="Chromosome 1"/>
</dbReference>
<dbReference type="GO" id="GO:0005886">
    <property type="term" value="C:plasma membrane"/>
    <property type="evidence" value="ECO:0007669"/>
    <property type="project" value="UniProtKB-SubCell"/>
</dbReference>
<dbReference type="GO" id="GO:0045259">
    <property type="term" value="C:proton-transporting ATP synthase complex"/>
    <property type="evidence" value="ECO:0007669"/>
    <property type="project" value="UniProtKB-KW"/>
</dbReference>
<dbReference type="GO" id="GO:0005524">
    <property type="term" value="F:ATP binding"/>
    <property type="evidence" value="ECO:0007669"/>
    <property type="project" value="UniProtKB-UniRule"/>
</dbReference>
<dbReference type="GO" id="GO:0046933">
    <property type="term" value="F:proton-transporting ATP synthase activity, rotational mechanism"/>
    <property type="evidence" value="ECO:0007669"/>
    <property type="project" value="UniProtKB-UniRule"/>
</dbReference>
<dbReference type="GO" id="GO:0042777">
    <property type="term" value="P:proton motive force-driven plasma membrane ATP synthesis"/>
    <property type="evidence" value="ECO:0007669"/>
    <property type="project" value="UniProtKB-UniRule"/>
</dbReference>
<dbReference type="CDD" id="cd12151">
    <property type="entry name" value="F1-ATPase_gamma"/>
    <property type="match status" value="1"/>
</dbReference>
<dbReference type="FunFam" id="1.10.287.80:FF:000005">
    <property type="entry name" value="ATP synthase gamma chain"/>
    <property type="match status" value="2"/>
</dbReference>
<dbReference type="FunFam" id="3.40.1380.10:FF:000001">
    <property type="entry name" value="ATP synthase gamma chain"/>
    <property type="match status" value="1"/>
</dbReference>
<dbReference type="Gene3D" id="3.40.1380.10">
    <property type="match status" value="1"/>
</dbReference>
<dbReference type="Gene3D" id="1.10.287.80">
    <property type="entry name" value="ATP synthase, gamma subunit, helix hairpin domain"/>
    <property type="match status" value="1"/>
</dbReference>
<dbReference type="HAMAP" id="MF_00815">
    <property type="entry name" value="ATP_synth_gamma_bact"/>
    <property type="match status" value="1"/>
</dbReference>
<dbReference type="InterPro" id="IPR035968">
    <property type="entry name" value="ATP_synth_F1_ATPase_gsu"/>
</dbReference>
<dbReference type="InterPro" id="IPR000131">
    <property type="entry name" value="ATP_synth_F1_gsu"/>
</dbReference>
<dbReference type="InterPro" id="IPR023632">
    <property type="entry name" value="ATP_synth_F1_gsu_CS"/>
</dbReference>
<dbReference type="NCBIfam" id="TIGR01146">
    <property type="entry name" value="ATPsyn_F1gamma"/>
    <property type="match status" value="1"/>
</dbReference>
<dbReference type="NCBIfam" id="NF004144">
    <property type="entry name" value="PRK05621.1-1"/>
    <property type="match status" value="1"/>
</dbReference>
<dbReference type="PANTHER" id="PTHR11693">
    <property type="entry name" value="ATP SYNTHASE GAMMA CHAIN"/>
    <property type="match status" value="1"/>
</dbReference>
<dbReference type="PANTHER" id="PTHR11693:SF22">
    <property type="entry name" value="ATP SYNTHASE SUBUNIT GAMMA, MITOCHONDRIAL"/>
    <property type="match status" value="1"/>
</dbReference>
<dbReference type="Pfam" id="PF00231">
    <property type="entry name" value="ATP-synt"/>
    <property type="match status" value="1"/>
</dbReference>
<dbReference type="PRINTS" id="PR00126">
    <property type="entry name" value="ATPASEGAMMA"/>
</dbReference>
<dbReference type="SUPFAM" id="SSF52943">
    <property type="entry name" value="ATP synthase (F1-ATPase), gamma subunit"/>
    <property type="match status" value="1"/>
</dbReference>
<dbReference type="PROSITE" id="PS00153">
    <property type="entry name" value="ATPASE_GAMMA"/>
    <property type="match status" value="1"/>
</dbReference>
<organism>
    <name type="scientific">Vibrio vulnificus (strain CMCP6)</name>
    <dbReference type="NCBI Taxonomy" id="216895"/>
    <lineage>
        <taxon>Bacteria</taxon>
        <taxon>Pseudomonadati</taxon>
        <taxon>Pseudomonadota</taxon>
        <taxon>Gammaproteobacteria</taxon>
        <taxon>Vibrionales</taxon>
        <taxon>Vibrionaceae</taxon>
        <taxon>Vibrio</taxon>
    </lineage>
</organism>
<reference key="1">
    <citation type="submission" date="2002-12" db="EMBL/GenBank/DDBJ databases">
        <title>Complete genome sequence of Vibrio vulnificus CMCP6.</title>
        <authorList>
            <person name="Rhee J.H."/>
            <person name="Kim S.Y."/>
            <person name="Chung S.S."/>
            <person name="Kim J.J."/>
            <person name="Moon Y.H."/>
            <person name="Jeong H."/>
            <person name="Choy H.E."/>
        </authorList>
    </citation>
    <scope>NUCLEOTIDE SEQUENCE [LARGE SCALE GENOMIC DNA]</scope>
    <source>
        <strain>CMCP6</strain>
    </source>
</reference>
<evidence type="ECO:0000255" key="1">
    <source>
        <dbReference type="HAMAP-Rule" id="MF_00815"/>
    </source>
</evidence>
<sequence>MAGAKEIRSKIGSVKSTQKITKAMEMVAASKMRRSQDAMEASRPYAETMRKVIGHVANASLEYRHPYLDEREAKRVGYIIISTDRGLCGGLNINVFKKAVTDMQAWKEKGAEVELAVIGSKATAFFKHGGAKVAAQVSGLGDSPSLEDLIGSVSVMLEKYDEGELDRLYLVFNKFVNTMVQQPTIDQLLPLPKSDSKDMQREHSWDYIYEPEPQALLDALLVRYVESQVYQGVVENLACEQAARMVAMKAATDNATNLIDDLELVYNKARQAAITQELSEIVGGAAAV</sequence>
<feature type="chain" id="PRO_0000073414" description="ATP synthase gamma chain">
    <location>
        <begin position="1"/>
        <end position="288"/>
    </location>
</feature>
<proteinExistence type="inferred from homology"/>
<accession>Q8DDG9</accession>
<gene>
    <name evidence="1" type="primary">atpG</name>
    <name type="ordered locus">VV1_1020</name>
</gene>
<keyword id="KW-0066">ATP synthesis</keyword>
<keyword id="KW-0997">Cell inner membrane</keyword>
<keyword id="KW-1003">Cell membrane</keyword>
<keyword id="KW-0139">CF(1)</keyword>
<keyword id="KW-0375">Hydrogen ion transport</keyword>
<keyword id="KW-0406">Ion transport</keyword>
<keyword id="KW-0472">Membrane</keyword>
<keyword id="KW-0813">Transport</keyword>